<proteinExistence type="inferred from homology"/>
<comment type="subunit">
    <text evidence="1">Part of the 50S ribosomal subunit.</text>
</comment>
<comment type="similarity">
    <text evidence="1">Belongs to the bacterial ribosomal protein bL31 family. Type B subfamily.</text>
</comment>
<name>RL31B_CORU7</name>
<dbReference type="EMBL" id="AM942444">
    <property type="protein sequence ID" value="CAQ04503.1"/>
    <property type="molecule type" value="Genomic_DNA"/>
</dbReference>
<dbReference type="RefSeq" id="WP_012359795.1">
    <property type="nucleotide sequence ID" value="NC_010545.1"/>
</dbReference>
<dbReference type="SMR" id="B1VFG4"/>
<dbReference type="STRING" id="504474.cu0543"/>
<dbReference type="KEGG" id="cur:cu0543"/>
<dbReference type="eggNOG" id="COG0254">
    <property type="taxonomic scope" value="Bacteria"/>
</dbReference>
<dbReference type="HOGENOM" id="CLU_114306_2_1_11"/>
<dbReference type="Proteomes" id="UP000001727">
    <property type="component" value="Chromosome"/>
</dbReference>
<dbReference type="GO" id="GO:1990904">
    <property type="term" value="C:ribonucleoprotein complex"/>
    <property type="evidence" value="ECO:0007669"/>
    <property type="project" value="UniProtKB-KW"/>
</dbReference>
<dbReference type="GO" id="GO:0005840">
    <property type="term" value="C:ribosome"/>
    <property type="evidence" value="ECO:0007669"/>
    <property type="project" value="UniProtKB-KW"/>
</dbReference>
<dbReference type="GO" id="GO:0003735">
    <property type="term" value="F:structural constituent of ribosome"/>
    <property type="evidence" value="ECO:0007669"/>
    <property type="project" value="InterPro"/>
</dbReference>
<dbReference type="GO" id="GO:0006412">
    <property type="term" value="P:translation"/>
    <property type="evidence" value="ECO:0007669"/>
    <property type="project" value="UniProtKB-UniRule"/>
</dbReference>
<dbReference type="Gene3D" id="4.10.830.30">
    <property type="entry name" value="Ribosomal protein L31"/>
    <property type="match status" value="1"/>
</dbReference>
<dbReference type="HAMAP" id="MF_00502">
    <property type="entry name" value="Ribosomal_bL31_2"/>
    <property type="match status" value="1"/>
</dbReference>
<dbReference type="InterPro" id="IPR034704">
    <property type="entry name" value="Ribosomal_bL28/bL31-like_sf"/>
</dbReference>
<dbReference type="InterPro" id="IPR002150">
    <property type="entry name" value="Ribosomal_bL31"/>
</dbReference>
<dbReference type="InterPro" id="IPR027493">
    <property type="entry name" value="Ribosomal_bL31_B"/>
</dbReference>
<dbReference type="InterPro" id="IPR042105">
    <property type="entry name" value="Ribosomal_bL31_sf"/>
</dbReference>
<dbReference type="NCBIfam" id="TIGR00105">
    <property type="entry name" value="L31"/>
    <property type="match status" value="1"/>
</dbReference>
<dbReference type="NCBIfam" id="NF001809">
    <property type="entry name" value="PRK00528.1"/>
    <property type="match status" value="1"/>
</dbReference>
<dbReference type="NCBIfam" id="NF002462">
    <property type="entry name" value="PRK01678.1"/>
    <property type="match status" value="1"/>
</dbReference>
<dbReference type="PANTHER" id="PTHR33280">
    <property type="entry name" value="50S RIBOSOMAL PROTEIN L31, CHLOROPLASTIC"/>
    <property type="match status" value="1"/>
</dbReference>
<dbReference type="PANTHER" id="PTHR33280:SF1">
    <property type="entry name" value="LARGE RIBOSOMAL SUBUNIT PROTEIN BL31C"/>
    <property type="match status" value="1"/>
</dbReference>
<dbReference type="Pfam" id="PF01197">
    <property type="entry name" value="Ribosomal_L31"/>
    <property type="match status" value="1"/>
</dbReference>
<dbReference type="PRINTS" id="PR01249">
    <property type="entry name" value="RIBOSOMALL31"/>
</dbReference>
<dbReference type="SUPFAM" id="SSF143800">
    <property type="entry name" value="L28p-like"/>
    <property type="match status" value="1"/>
</dbReference>
<dbReference type="PROSITE" id="PS01143">
    <property type="entry name" value="RIBOSOMAL_L31"/>
    <property type="match status" value="1"/>
</dbReference>
<evidence type="ECO:0000255" key="1">
    <source>
        <dbReference type="HAMAP-Rule" id="MF_00502"/>
    </source>
</evidence>
<evidence type="ECO:0000305" key="2"/>
<organism>
    <name type="scientific">Corynebacterium urealyticum (strain ATCC 43042 / DSM 7109)</name>
    <dbReference type="NCBI Taxonomy" id="504474"/>
    <lineage>
        <taxon>Bacteria</taxon>
        <taxon>Bacillati</taxon>
        <taxon>Actinomycetota</taxon>
        <taxon>Actinomycetes</taxon>
        <taxon>Mycobacteriales</taxon>
        <taxon>Corynebacteriaceae</taxon>
        <taxon>Corynebacterium</taxon>
    </lineage>
</organism>
<protein>
    <recommendedName>
        <fullName evidence="1">Large ribosomal subunit protein bL31B</fullName>
    </recommendedName>
    <alternativeName>
        <fullName evidence="2">50S ribosomal protein L31 type B</fullName>
    </alternativeName>
</protein>
<sequence>MKKDIHPDYHPVVFKDSATGKQFLTRSTATSDRTVEWEDGNEYPLIVVDITSESHPFWTGAQRVMDTAGRVEKFQRRYGGMARRKKKTQ</sequence>
<gene>
    <name evidence="1" type="primary">rpmE2</name>
    <name type="ordered locus">cu0543</name>
</gene>
<accession>B1VFG4</accession>
<reference key="1">
    <citation type="journal article" date="2008" name="J. Biotechnol.">
        <title>The lifestyle of Corynebacterium urealyticum derived from its complete genome sequence established by pyrosequencing.</title>
        <authorList>
            <person name="Tauch A."/>
            <person name="Trost E."/>
            <person name="Tilker A."/>
            <person name="Ludewig U."/>
            <person name="Schneiker S."/>
            <person name="Goesmann A."/>
            <person name="Arnold W."/>
            <person name="Bekel T."/>
            <person name="Brinkrolf K."/>
            <person name="Brune I."/>
            <person name="Goetker S."/>
            <person name="Kalinowski J."/>
            <person name="Kamp P.-B."/>
            <person name="Lobo F.P."/>
            <person name="Viehoever P."/>
            <person name="Weisshaar B."/>
            <person name="Soriano F."/>
            <person name="Droege M."/>
            <person name="Puehler A."/>
        </authorList>
    </citation>
    <scope>NUCLEOTIDE SEQUENCE [LARGE SCALE GENOMIC DNA]</scope>
    <source>
        <strain>ATCC 43042 / DSM 7109</strain>
    </source>
</reference>
<keyword id="KW-1185">Reference proteome</keyword>
<keyword id="KW-0687">Ribonucleoprotein</keyword>
<keyword id="KW-0689">Ribosomal protein</keyword>
<feature type="chain" id="PRO_1000126799" description="Large ribosomal subunit protein bL31B">
    <location>
        <begin position="1"/>
        <end position="89"/>
    </location>
</feature>